<feature type="chain" id="PRO_1000012034" description="Polyamine aminopropyltransferase">
    <location>
        <begin position="1"/>
        <end position="296"/>
    </location>
</feature>
<feature type="domain" description="PABS" evidence="1">
    <location>
        <begin position="5"/>
        <end position="238"/>
    </location>
</feature>
<feature type="active site" description="Proton acceptor" evidence="1">
    <location>
        <position position="158"/>
    </location>
</feature>
<feature type="binding site" evidence="1">
    <location>
        <position position="33"/>
    </location>
    <ligand>
        <name>S-methyl-5'-thioadenosine</name>
        <dbReference type="ChEBI" id="CHEBI:17509"/>
    </ligand>
</feature>
<feature type="binding site" evidence="1">
    <location>
        <position position="64"/>
    </location>
    <ligand>
        <name>spermidine</name>
        <dbReference type="ChEBI" id="CHEBI:57834"/>
    </ligand>
</feature>
<feature type="binding site" evidence="1">
    <location>
        <position position="88"/>
    </location>
    <ligand>
        <name>spermidine</name>
        <dbReference type="ChEBI" id="CHEBI:57834"/>
    </ligand>
</feature>
<feature type="binding site" evidence="1">
    <location>
        <position position="108"/>
    </location>
    <ligand>
        <name>S-methyl-5'-thioadenosine</name>
        <dbReference type="ChEBI" id="CHEBI:17509"/>
    </ligand>
</feature>
<feature type="binding site" evidence="1">
    <location>
        <begin position="140"/>
        <end position="141"/>
    </location>
    <ligand>
        <name>S-methyl-5'-thioadenosine</name>
        <dbReference type="ChEBI" id="CHEBI:17509"/>
    </ligand>
</feature>
<feature type="binding site" evidence="1">
    <location>
        <begin position="158"/>
        <end position="161"/>
    </location>
    <ligand>
        <name>spermidine</name>
        <dbReference type="ChEBI" id="CHEBI:57834"/>
    </ligand>
</feature>
<feature type="binding site" evidence="1">
    <location>
        <position position="165"/>
    </location>
    <ligand>
        <name>S-methyl-5'-thioadenosine</name>
        <dbReference type="ChEBI" id="CHEBI:17509"/>
    </ligand>
</feature>
<keyword id="KW-0963">Cytoplasm</keyword>
<keyword id="KW-0620">Polyamine biosynthesis</keyword>
<keyword id="KW-0745">Spermidine biosynthesis</keyword>
<keyword id="KW-0808">Transferase</keyword>
<proteinExistence type="inferred from homology"/>
<gene>
    <name evidence="1" type="primary">speE</name>
    <name type="ordered locus">YPA_2913</name>
</gene>
<comment type="function">
    <text evidence="1">Catalyzes the irreversible transfer of a propylamine group from the amino donor S-adenosylmethioninamine (decarboxy-AdoMet) to putrescine (1,4-diaminobutane) to yield spermidine.</text>
</comment>
<comment type="catalytic activity">
    <reaction evidence="1">
        <text>S-adenosyl 3-(methylsulfanyl)propylamine + putrescine = S-methyl-5'-thioadenosine + spermidine + H(+)</text>
        <dbReference type="Rhea" id="RHEA:12721"/>
        <dbReference type="ChEBI" id="CHEBI:15378"/>
        <dbReference type="ChEBI" id="CHEBI:17509"/>
        <dbReference type="ChEBI" id="CHEBI:57443"/>
        <dbReference type="ChEBI" id="CHEBI:57834"/>
        <dbReference type="ChEBI" id="CHEBI:326268"/>
        <dbReference type="EC" id="2.5.1.16"/>
    </reaction>
</comment>
<comment type="pathway">
    <text evidence="1">Amine and polyamine biosynthesis; spermidine biosynthesis; spermidine from putrescine: step 1/1.</text>
</comment>
<comment type="subunit">
    <text evidence="1">Homodimer or homotetramer.</text>
</comment>
<comment type="subcellular location">
    <subcellularLocation>
        <location evidence="1">Cytoplasm</location>
    </subcellularLocation>
</comment>
<comment type="similarity">
    <text evidence="1">Belongs to the spermidine/spermine synthase family.</text>
</comment>
<name>SPEE_YERPA</name>
<reference key="1">
    <citation type="journal article" date="2006" name="J. Bacteriol.">
        <title>Complete genome sequence of Yersinia pestis strains Antiqua and Nepal516: evidence of gene reduction in an emerging pathogen.</title>
        <authorList>
            <person name="Chain P.S.G."/>
            <person name="Hu P."/>
            <person name="Malfatti S.A."/>
            <person name="Radnedge L."/>
            <person name="Larimer F."/>
            <person name="Vergez L.M."/>
            <person name="Worsham P."/>
            <person name="Chu M.C."/>
            <person name="Andersen G.L."/>
        </authorList>
    </citation>
    <scope>NUCLEOTIDE SEQUENCE [LARGE SCALE GENOMIC DNA]</scope>
    <source>
        <strain>Antiqua</strain>
    </source>
</reference>
<dbReference type="EC" id="2.5.1.16" evidence="1"/>
<dbReference type="EMBL" id="CP000308">
    <property type="protein sequence ID" value="ABG14875.1"/>
    <property type="molecule type" value="Genomic_DNA"/>
</dbReference>
<dbReference type="RefSeq" id="WP_002209338.1">
    <property type="nucleotide sequence ID" value="NZ_CP009906.1"/>
</dbReference>
<dbReference type="SMR" id="Q1C3U7"/>
<dbReference type="GeneID" id="57975298"/>
<dbReference type="KEGG" id="ypa:YPA_2913"/>
<dbReference type="UniPathway" id="UPA00248">
    <property type="reaction ID" value="UER00314"/>
</dbReference>
<dbReference type="Proteomes" id="UP000001971">
    <property type="component" value="Chromosome"/>
</dbReference>
<dbReference type="GO" id="GO:0005829">
    <property type="term" value="C:cytosol"/>
    <property type="evidence" value="ECO:0007669"/>
    <property type="project" value="TreeGrafter"/>
</dbReference>
<dbReference type="GO" id="GO:0004766">
    <property type="term" value="F:spermidine synthase activity"/>
    <property type="evidence" value="ECO:0007669"/>
    <property type="project" value="UniProtKB-UniRule"/>
</dbReference>
<dbReference type="GO" id="GO:0008295">
    <property type="term" value="P:spermidine biosynthetic process"/>
    <property type="evidence" value="ECO:0007669"/>
    <property type="project" value="UniProtKB-UniRule"/>
</dbReference>
<dbReference type="CDD" id="cd02440">
    <property type="entry name" value="AdoMet_MTases"/>
    <property type="match status" value="1"/>
</dbReference>
<dbReference type="FunFam" id="2.30.140.10:FF:000002">
    <property type="entry name" value="Polyamine aminopropyltransferase"/>
    <property type="match status" value="1"/>
</dbReference>
<dbReference type="FunFam" id="3.40.50.150:FF:000026">
    <property type="entry name" value="Polyamine aminopropyltransferase"/>
    <property type="match status" value="1"/>
</dbReference>
<dbReference type="Gene3D" id="2.30.140.10">
    <property type="entry name" value="Spermidine synthase, tetramerisation domain"/>
    <property type="match status" value="1"/>
</dbReference>
<dbReference type="Gene3D" id="3.40.50.150">
    <property type="entry name" value="Vaccinia Virus protein VP39"/>
    <property type="match status" value="1"/>
</dbReference>
<dbReference type="HAMAP" id="MF_00198">
    <property type="entry name" value="Spermidine_synth"/>
    <property type="match status" value="1"/>
</dbReference>
<dbReference type="InterPro" id="IPR030374">
    <property type="entry name" value="PABS"/>
</dbReference>
<dbReference type="InterPro" id="IPR030373">
    <property type="entry name" value="PABS_CS"/>
</dbReference>
<dbReference type="InterPro" id="IPR029063">
    <property type="entry name" value="SAM-dependent_MTases_sf"/>
</dbReference>
<dbReference type="InterPro" id="IPR001045">
    <property type="entry name" value="Spermi_synthase"/>
</dbReference>
<dbReference type="InterPro" id="IPR035246">
    <property type="entry name" value="Spermidine_synt_N"/>
</dbReference>
<dbReference type="InterPro" id="IPR037163">
    <property type="entry name" value="Spermidine_synt_N_sf"/>
</dbReference>
<dbReference type="NCBIfam" id="NF037959">
    <property type="entry name" value="MFS_SpdSyn"/>
    <property type="match status" value="1"/>
</dbReference>
<dbReference type="NCBIfam" id="NF002010">
    <property type="entry name" value="PRK00811.1"/>
    <property type="match status" value="1"/>
</dbReference>
<dbReference type="NCBIfam" id="TIGR00417">
    <property type="entry name" value="speE"/>
    <property type="match status" value="1"/>
</dbReference>
<dbReference type="PANTHER" id="PTHR11558:SF11">
    <property type="entry name" value="SPERMIDINE SYNTHASE"/>
    <property type="match status" value="1"/>
</dbReference>
<dbReference type="PANTHER" id="PTHR11558">
    <property type="entry name" value="SPERMIDINE/SPERMINE SYNTHASE"/>
    <property type="match status" value="1"/>
</dbReference>
<dbReference type="Pfam" id="PF17284">
    <property type="entry name" value="Spermine_synt_N"/>
    <property type="match status" value="1"/>
</dbReference>
<dbReference type="Pfam" id="PF01564">
    <property type="entry name" value="Spermine_synth"/>
    <property type="match status" value="1"/>
</dbReference>
<dbReference type="SUPFAM" id="SSF53335">
    <property type="entry name" value="S-adenosyl-L-methionine-dependent methyltransferases"/>
    <property type="match status" value="1"/>
</dbReference>
<dbReference type="PROSITE" id="PS01330">
    <property type="entry name" value="PABS_1"/>
    <property type="match status" value="1"/>
</dbReference>
<dbReference type="PROSITE" id="PS51006">
    <property type="entry name" value="PABS_2"/>
    <property type="match status" value="1"/>
</dbReference>
<sequence>MSQKELWYETLHANFGQYFSVENVLFREKTEHQDLVIFENPELGRVMALDGVVQTTERDEFIYHEMMTHVPLLAHGQAKKVLIIGGGDGAMLREVSRHKNIEQITMVEIDAGVVEFCRQYLPNHSAGAYDDPRFKLVIDDGVNFVNQTTEKFDVIISDCTDPIGPGESLFTSVFYEGCARSLNEGGIFVAQNGVCFLQQDEAVNSHNKLSHYFSDVSFYQAAIPTYYGGIMTFAWATQNPALRQLDLATLQNRFAQAGLACRYYNPAIHVGSFALPQYLLDALTTIPKVIGVDSSE</sequence>
<accession>Q1C3U7</accession>
<evidence type="ECO:0000255" key="1">
    <source>
        <dbReference type="HAMAP-Rule" id="MF_00198"/>
    </source>
</evidence>
<protein>
    <recommendedName>
        <fullName evidence="1">Polyamine aminopropyltransferase</fullName>
    </recommendedName>
    <alternativeName>
        <fullName evidence="1">Putrescine aminopropyltransferase</fullName>
        <shortName evidence="1">PAPT</shortName>
    </alternativeName>
    <alternativeName>
        <fullName evidence="1">Spermidine synthase</fullName>
        <shortName evidence="1">SPDS</shortName>
        <shortName evidence="1">SPDSY</shortName>
        <ecNumber evidence="1">2.5.1.16</ecNumber>
    </alternativeName>
</protein>
<organism>
    <name type="scientific">Yersinia pestis bv. Antiqua (strain Antiqua)</name>
    <dbReference type="NCBI Taxonomy" id="360102"/>
    <lineage>
        <taxon>Bacteria</taxon>
        <taxon>Pseudomonadati</taxon>
        <taxon>Pseudomonadota</taxon>
        <taxon>Gammaproteobacteria</taxon>
        <taxon>Enterobacterales</taxon>
        <taxon>Yersiniaceae</taxon>
        <taxon>Yersinia</taxon>
    </lineage>
</organism>